<dbReference type="EC" id="5.3.1.1" evidence="1"/>
<dbReference type="EMBL" id="BX248583">
    <property type="protein sequence ID" value="CAD83276.1"/>
    <property type="molecule type" value="Genomic_DNA"/>
</dbReference>
<dbReference type="SMR" id="Q7VRL0"/>
<dbReference type="STRING" id="203907.Bfl601"/>
<dbReference type="KEGG" id="bfl:Bfl601"/>
<dbReference type="eggNOG" id="COG0149">
    <property type="taxonomic scope" value="Bacteria"/>
</dbReference>
<dbReference type="HOGENOM" id="CLU_024251_2_1_6"/>
<dbReference type="OrthoDB" id="9809429at2"/>
<dbReference type="UniPathway" id="UPA00109">
    <property type="reaction ID" value="UER00189"/>
</dbReference>
<dbReference type="UniPathway" id="UPA00138"/>
<dbReference type="Proteomes" id="UP000002192">
    <property type="component" value="Chromosome"/>
</dbReference>
<dbReference type="GO" id="GO:0005829">
    <property type="term" value="C:cytosol"/>
    <property type="evidence" value="ECO:0007669"/>
    <property type="project" value="TreeGrafter"/>
</dbReference>
<dbReference type="GO" id="GO:0004807">
    <property type="term" value="F:triose-phosphate isomerase activity"/>
    <property type="evidence" value="ECO:0007669"/>
    <property type="project" value="UniProtKB-UniRule"/>
</dbReference>
<dbReference type="GO" id="GO:0006094">
    <property type="term" value="P:gluconeogenesis"/>
    <property type="evidence" value="ECO:0007669"/>
    <property type="project" value="UniProtKB-UniRule"/>
</dbReference>
<dbReference type="GO" id="GO:0046166">
    <property type="term" value="P:glyceraldehyde-3-phosphate biosynthetic process"/>
    <property type="evidence" value="ECO:0007669"/>
    <property type="project" value="TreeGrafter"/>
</dbReference>
<dbReference type="GO" id="GO:0019563">
    <property type="term" value="P:glycerol catabolic process"/>
    <property type="evidence" value="ECO:0007669"/>
    <property type="project" value="TreeGrafter"/>
</dbReference>
<dbReference type="GO" id="GO:0006096">
    <property type="term" value="P:glycolytic process"/>
    <property type="evidence" value="ECO:0007669"/>
    <property type="project" value="UniProtKB-UniRule"/>
</dbReference>
<dbReference type="CDD" id="cd00311">
    <property type="entry name" value="TIM"/>
    <property type="match status" value="1"/>
</dbReference>
<dbReference type="FunFam" id="3.20.20.70:FF:000020">
    <property type="entry name" value="Triosephosphate isomerase"/>
    <property type="match status" value="1"/>
</dbReference>
<dbReference type="Gene3D" id="3.20.20.70">
    <property type="entry name" value="Aldolase class I"/>
    <property type="match status" value="1"/>
</dbReference>
<dbReference type="HAMAP" id="MF_00147_B">
    <property type="entry name" value="TIM_B"/>
    <property type="match status" value="1"/>
</dbReference>
<dbReference type="InterPro" id="IPR013785">
    <property type="entry name" value="Aldolase_TIM"/>
</dbReference>
<dbReference type="InterPro" id="IPR035990">
    <property type="entry name" value="TIM_sf"/>
</dbReference>
<dbReference type="InterPro" id="IPR022896">
    <property type="entry name" value="TrioseP_Isoase_bac/euk"/>
</dbReference>
<dbReference type="InterPro" id="IPR000652">
    <property type="entry name" value="Triosephosphate_isomerase"/>
</dbReference>
<dbReference type="InterPro" id="IPR020861">
    <property type="entry name" value="Triosephosphate_isomerase_AS"/>
</dbReference>
<dbReference type="NCBIfam" id="TIGR00419">
    <property type="entry name" value="tim"/>
    <property type="match status" value="1"/>
</dbReference>
<dbReference type="PANTHER" id="PTHR21139">
    <property type="entry name" value="TRIOSEPHOSPHATE ISOMERASE"/>
    <property type="match status" value="1"/>
</dbReference>
<dbReference type="PANTHER" id="PTHR21139:SF42">
    <property type="entry name" value="TRIOSEPHOSPHATE ISOMERASE"/>
    <property type="match status" value="1"/>
</dbReference>
<dbReference type="Pfam" id="PF00121">
    <property type="entry name" value="TIM"/>
    <property type="match status" value="1"/>
</dbReference>
<dbReference type="SUPFAM" id="SSF51351">
    <property type="entry name" value="Triosephosphate isomerase (TIM)"/>
    <property type="match status" value="1"/>
</dbReference>
<dbReference type="PROSITE" id="PS00171">
    <property type="entry name" value="TIM_1"/>
    <property type="match status" value="1"/>
</dbReference>
<dbReference type="PROSITE" id="PS51440">
    <property type="entry name" value="TIM_2"/>
    <property type="match status" value="1"/>
</dbReference>
<keyword id="KW-0963">Cytoplasm</keyword>
<keyword id="KW-0312">Gluconeogenesis</keyword>
<keyword id="KW-0324">Glycolysis</keyword>
<keyword id="KW-0413">Isomerase</keyword>
<keyword id="KW-1185">Reference proteome</keyword>
<protein>
    <recommendedName>
        <fullName evidence="1">Triosephosphate isomerase</fullName>
        <shortName evidence="1">TIM</shortName>
        <shortName evidence="1">TPI</shortName>
        <ecNumber evidence="1">5.3.1.1</ecNumber>
    </recommendedName>
    <alternativeName>
        <fullName evidence="1">Triose-phosphate isomerase</fullName>
    </alternativeName>
</protein>
<feature type="chain" id="PRO_0000090200" description="Triosephosphate isomerase">
    <location>
        <begin position="1"/>
        <end position="262"/>
    </location>
</feature>
<feature type="active site" description="Electrophile" evidence="1">
    <location>
        <position position="99"/>
    </location>
</feature>
<feature type="active site" description="Proton acceptor" evidence="1">
    <location>
        <position position="171"/>
    </location>
</feature>
<feature type="binding site" evidence="1">
    <location>
        <begin position="9"/>
        <end position="11"/>
    </location>
    <ligand>
        <name>substrate</name>
    </ligand>
</feature>
<feature type="binding site" evidence="1">
    <location>
        <position position="177"/>
    </location>
    <ligand>
        <name>substrate</name>
    </ligand>
</feature>
<feature type="binding site" evidence="1">
    <location>
        <position position="216"/>
    </location>
    <ligand>
        <name>substrate</name>
    </ligand>
</feature>
<organism>
    <name type="scientific">Blochmanniella floridana</name>
    <dbReference type="NCBI Taxonomy" id="203907"/>
    <lineage>
        <taxon>Bacteria</taxon>
        <taxon>Pseudomonadati</taxon>
        <taxon>Pseudomonadota</taxon>
        <taxon>Gammaproteobacteria</taxon>
        <taxon>Enterobacterales</taxon>
        <taxon>Enterobacteriaceae</taxon>
        <taxon>ant endosymbionts</taxon>
        <taxon>Candidatus Blochmanniella</taxon>
    </lineage>
</organism>
<name>TPIS_BLOFL</name>
<evidence type="ECO:0000255" key="1">
    <source>
        <dbReference type="HAMAP-Rule" id="MF_00147"/>
    </source>
</evidence>
<proteinExistence type="inferred from homology"/>
<gene>
    <name evidence="1" type="primary">tpiA</name>
    <name type="ordered locus">Bfl601</name>
</gene>
<sequence>MKNLSIIANWKLNGNKNTITNSLINLTTQLTNIPQYIKIAIAPPILYIDMVKNHLTSYNNKTIELCSQNVDIHLSGAFTGDISASMLKDLSVKYVLIGHSERRIYHKENNSLIAQKFSIIKQTELIPILCIGENKEERDSGSTQSICIQQIDSIIKLVGIKAFENTIIAYEPVWAIGSGSSASPRNVQSIHQFIRNYIAQYDKTIANQISIQYGGSITTDNVLEFITQKDIDGVLVGSASLDIRNLIKIINLSSNLIKKTYQ</sequence>
<reference key="1">
    <citation type="journal article" date="2003" name="Proc. Natl. Acad. Sci. U.S.A.">
        <title>The genome sequence of Blochmannia floridanus: comparative analysis of reduced genomes.</title>
        <authorList>
            <person name="Gil R."/>
            <person name="Silva F.J."/>
            <person name="Zientz E."/>
            <person name="Delmotte F."/>
            <person name="Gonzalez-Candelas F."/>
            <person name="Latorre A."/>
            <person name="Rausell C."/>
            <person name="Kamerbeek J."/>
            <person name="Gadau J."/>
            <person name="Hoelldobler B."/>
            <person name="van Ham R.C.H.J."/>
            <person name="Gross R."/>
            <person name="Moya A."/>
        </authorList>
    </citation>
    <scope>NUCLEOTIDE SEQUENCE [LARGE SCALE GENOMIC DNA]</scope>
</reference>
<comment type="function">
    <text evidence="1">Involved in the gluconeogenesis. Catalyzes stereospecifically the conversion of dihydroxyacetone phosphate (DHAP) to D-glyceraldehyde-3-phosphate (G3P).</text>
</comment>
<comment type="catalytic activity">
    <reaction evidence="1">
        <text>D-glyceraldehyde 3-phosphate = dihydroxyacetone phosphate</text>
        <dbReference type="Rhea" id="RHEA:18585"/>
        <dbReference type="ChEBI" id="CHEBI:57642"/>
        <dbReference type="ChEBI" id="CHEBI:59776"/>
        <dbReference type="EC" id="5.3.1.1"/>
    </reaction>
</comment>
<comment type="pathway">
    <text evidence="1">Carbohydrate biosynthesis; gluconeogenesis.</text>
</comment>
<comment type="pathway">
    <text evidence="1">Carbohydrate degradation; glycolysis; D-glyceraldehyde 3-phosphate from glycerone phosphate: step 1/1.</text>
</comment>
<comment type="subunit">
    <text evidence="1">Homodimer.</text>
</comment>
<comment type="subcellular location">
    <subcellularLocation>
        <location evidence="1">Cytoplasm</location>
    </subcellularLocation>
</comment>
<comment type="similarity">
    <text evidence="1">Belongs to the triosephosphate isomerase family.</text>
</comment>
<accession>Q7VRL0</accession>